<feature type="chain" id="PRO_0000201277" description="Cardiolipin synthase 1">
    <location>
        <begin position="1"/>
        <end position="490"/>
    </location>
</feature>
<feature type="transmembrane region" description="Helical" evidence="1">
    <location>
        <begin position="9"/>
        <end position="29"/>
    </location>
</feature>
<feature type="transmembrane region" description="Helical" evidence="1">
    <location>
        <begin position="42"/>
        <end position="62"/>
    </location>
</feature>
<feature type="domain" description="PLD phosphodiesterase 1" evidence="1">
    <location>
        <begin position="225"/>
        <end position="252"/>
    </location>
</feature>
<feature type="domain" description="PLD phosphodiesterase 2" evidence="1">
    <location>
        <begin position="403"/>
        <end position="430"/>
    </location>
</feature>
<feature type="active site" evidence="1">
    <location>
        <position position="230"/>
    </location>
</feature>
<feature type="active site" evidence="1">
    <location>
        <position position="232"/>
    </location>
</feature>
<feature type="active site" evidence="1">
    <location>
        <position position="237"/>
    </location>
</feature>
<feature type="active site" evidence="1">
    <location>
        <position position="408"/>
    </location>
</feature>
<feature type="active site" evidence="1">
    <location>
        <position position="410"/>
    </location>
</feature>
<feature type="active site" evidence="1">
    <location>
        <position position="415"/>
    </location>
</feature>
<dbReference type="EC" id="2.7.8.-" evidence="1"/>
<dbReference type="EMBL" id="CP000029">
    <property type="protein sequence ID" value="AAW54232.1"/>
    <property type="molecule type" value="Genomic_DNA"/>
</dbReference>
<dbReference type="SMR" id="Q5HPM5"/>
<dbReference type="STRING" id="176279.SERP0885"/>
<dbReference type="KEGG" id="ser:SERP0885"/>
<dbReference type="eggNOG" id="COG1502">
    <property type="taxonomic scope" value="Bacteria"/>
</dbReference>
<dbReference type="HOGENOM" id="CLU_038053_1_1_9"/>
<dbReference type="Proteomes" id="UP000000531">
    <property type="component" value="Chromosome"/>
</dbReference>
<dbReference type="GO" id="GO:0005886">
    <property type="term" value="C:plasma membrane"/>
    <property type="evidence" value="ECO:0007669"/>
    <property type="project" value="UniProtKB-SubCell"/>
</dbReference>
<dbReference type="GO" id="GO:0008808">
    <property type="term" value="F:cardiolipin synthase activity"/>
    <property type="evidence" value="ECO:0007669"/>
    <property type="project" value="InterPro"/>
</dbReference>
<dbReference type="GO" id="GO:0032049">
    <property type="term" value="P:cardiolipin biosynthetic process"/>
    <property type="evidence" value="ECO:0007669"/>
    <property type="project" value="InterPro"/>
</dbReference>
<dbReference type="CDD" id="cd09110">
    <property type="entry name" value="PLDc_CLS_1"/>
    <property type="match status" value="1"/>
</dbReference>
<dbReference type="CDD" id="cd09112">
    <property type="entry name" value="PLDc_CLS_2"/>
    <property type="match status" value="1"/>
</dbReference>
<dbReference type="FunFam" id="3.30.870.10:FF:000014">
    <property type="entry name" value="Cardiolipin synthase"/>
    <property type="match status" value="1"/>
</dbReference>
<dbReference type="Gene3D" id="3.30.870.10">
    <property type="entry name" value="Endonuclease Chain A"/>
    <property type="match status" value="2"/>
</dbReference>
<dbReference type="HAMAP" id="MF_01916">
    <property type="entry name" value="Cardiolipin_synth_Cls"/>
    <property type="match status" value="1"/>
</dbReference>
<dbReference type="InterPro" id="IPR030874">
    <property type="entry name" value="Cardiolipin_synth_Firmi"/>
</dbReference>
<dbReference type="InterPro" id="IPR022924">
    <property type="entry name" value="Cardiolipin_synthase"/>
</dbReference>
<dbReference type="InterPro" id="IPR027379">
    <property type="entry name" value="CLS_N"/>
</dbReference>
<dbReference type="InterPro" id="IPR025202">
    <property type="entry name" value="PLD-like_dom"/>
</dbReference>
<dbReference type="InterPro" id="IPR001736">
    <property type="entry name" value="PLipase_D/transphosphatidylase"/>
</dbReference>
<dbReference type="NCBIfam" id="TIGR04265">
    <property type="entry name" value="bac_cardiolipin"/>
    <property type="match status" value="1"/>
</dbReference>
<dbReference type="PANTHER" id="PTHR21248">
    <property type="entry name" value="CARDIOLIPIN SYNTHASE"/>
    <property type="match status" value="1"/>
</dbReference>
<dbReference type="PANTHER" id="PTHR21248:SF22">
    <property type="entry name" value="PHOSPHOLIPASE D"/>
    <property type="match status" value="1"/>
</dbReference>
<dbReference type="Pfam" id="PF13091">
    <property type="entry name" value="PLDc_2"/>
    <property type="match status" value="2"/>
</dbReference>
<dbReference type="Pfam" id="PF13396">
    <property type="entry name" value="PLDc_N"/>
    <property type="match status" value="1"/>
</dbReference>
<dbReference type="SMART" id="SM00155">
    <property type="entry name" value="PLDc"/>
    <property type="match status" value="2"/>
</dbReference>
<dbReference type="SUPFAM" id="SSF56024">
    <property type="entry name" value="Phospholipase D/nuclease"/>
    <property type="match status" value="2"/>
</dbReference>
<dbReference type="PROSITE" id="PS50035">
    <property type="entry name" value="PLD"/>
    <property type="match status" value="2"/>
</dbReference>
<evidence type="ECO:0000255" key="1">
    <source>
        <dbReference type="HAMAP-Rule" id="MF_01916"/>
    </source>
</evidence>
<protein>
    <recommendedName>
        <fullName evidence="1">Cardiolipin synthase 1</fullName>
        <shortName evidence="1">CL synthase 1</shortName>
        <ecNumber evidence="1">2.7.8.-</ecNumber>
    </recommendedName>
</protein>
<organism>
    <name type="scientific">Staphylococcus epidermidis (strain ATCC 35984 / DSM 28319 / BCRC 17069 / CCUG 31568 / BM 3577 / RP62A)</name>
    <dbReference type="NCBI Taxonomy" id="176279"/>
    <lineage>
        <taxon>Bacteria</taxon>
        <taxon>Bacillati</taxon>
        <taxon>Bacillota</taxon>
        <taxon>Bacilli</taxon>
        <taxon>Bacillales</taxon>
        <taxon>Staphylococcaceae</taxon>
        <taxon>Staphylococcus</taxon>
    </lineage>
</organism>
<sequence length="490" mass="56510">MNFGFLGTILTILLVVGFITNVVLAFVIIFLERDRRTASSTWAWLFVLFVLPVIGFILYLFLGRTVSKKKMEKNNGDELHAFEDLVQDQIDSFDKHNYGYINDQVIKHRDLIRMLLMKQDAFLTENNKIDLFTDGHKLYEKVLEDIYNAQDYIHLEYYTFELDGLGKRILDALETKLKEGLEVKLLYDDVGSKKVRLSKFKHFRALGGEVEAFFPSKVPLINFRMNNRNHRKIIIIDGQIGYIGGFNVGDDYLGLGKLGYWRDTHTRVQGEVIDALQLRFILDWNSQSHRPQFKFDQKYFPKKIGDKGNAAIQIASSGPAFDLHQIEYGYTKMIMSAKKSIYLQSPYFIPDQSYINALKMAANSGVEVNLMIPCKPDHPFVYWATFSNAADLLDSGVNIYTYQNGFIHSKILMIDDEISSIGSANMDFRSFELNFEVNAFIYDEDIAKQLRQAFEKDIEQSKLLTKKVYDKRPLSIKFKEGLAKLISPIL</sequence>
<proteinExistence type="inferred from homology"/>
<comment type="function">
    <text evidence="1">Catalyzes the reversible phosphatidyl group transfer from one phosphatidylglycerol molecule to another to form cardiolipin (CL) (diphosphatidylglycerol) and glycerol.</text>
</comment>
<comment type="catalytic activity">
    <reaction evidence="1">
        <text>2 a 1,2-diacyl-sn-glycero-3-phospho-(1'-sn-glycerol) = a cardiolipin + glycerol</text>
        <dbReference type="Rhea" id="RHEA:31451"/>
        <dbReference type="ChEBI" id="CHEBI:17754"/>
        <dbReference type="ChEBI" id="CHEBI:62237"/>
        <dbReference type="ChEBI" id="CHEBI:64716"/>
    </reaction>
</comment>
<comment type="subcellular location">
    <subcellularLocation>
        <location evidence="1">Cell membrane</location>
        <topology evidence="1">Multi-pass membrane protein</topology>
    </subcellularLocation>
</comment>
<comment type="similarity">
    <text evidence="1">Belongs to the phospholipase D family. Cardiolipin synthase subfamily.</text>
</comment>
<accession>Q5HPM5</accession>
<keyword id="KW-1003">Cell membrane</keyword>
<keyword id="KW-0444">Lipid biosynthesis</keyword>
<keyword id="KW-0443">Lipid metabolism</keyword>
<keyword id="KW-0472">Membrane</keyword>
<keyword id="KW-0594">Phospholipid biosynthesis</keyword>
<keyword id="KW-1208">Phospholipid metabolism</keyword>
<keyword id="KW-1185">Reference proteome</keyword>
<keyword id="KW-0677">Repeat</keyword>
<keyword id="KW-0808">Transferase</keyword>
<keyword id="KW-0812">Transmembrane</keyword>
<keyword id="KW-1133">Transmembrane helix</keyword>
<reference key="1">
    <citation type="journal article" date="2005" name="J. Bacteriol.">
        <title>Insights on evolution of virulence and resistance from the complete genome analysis of an early methicillin-resistant Staphylococcus aureus strain and a biofilm-producing methicillin-resistant Staphylococcus epidermidis strain.</title>
        <authorList>
            <person name="Gill S.R."/>
            <person name="Fouts D.E."/>
            <person name="Archer G.L."/>
            <person name="Mongodin E.F."/>
            <person name="DeBoy R.T."/>
            <person name="Ravel J."/>
            <person name="Paulsen I.T."/>
            <person name="Kolonay J.F."/>
            <person name="Brinkac L.M."/>
            <person name="Beanan M.J."/>
            <person name="Dodson R.J."/>
            <person name="Daugherty S.C."/>
            <person name="Madupu R."/>
            <person name="Angiuoli S.V."/>
            <person name="Durkin A.S."/>
            <person name="Haft D.H."/>
            <person name="Vamathevan J.J."/>
            <person name="Khouri H."/>
            <person name="Utterback T.R."/>
            <person name="Lee C."/>
            <person name="Dimitrov G."/>
            <person name="Jiang L."/>
            <person name="Qin H."/>
            <person name="Weidman J."/>
            <person name="Tran K."/>
            <person name="Kang K.H."/>
            <person name="Hance I.R."/>
            <person name="Nelson K.E."/>
            <person name="Fraser C.M."/>
        </authorList>
    </citation>
    <scope>NUCLEOTIDE SEQUENCE [LARGE SCALE GENOMIC DNA]</scope>
    <source>
        <strain>ATCC 35984 / DSM 28319 / BCRC 17069 / CCUG 31568 / BM 3577 / RP62A</strain>
    </source>
</reference>
<gene>
    <name type="primary">cls1</name>
    <name type="ordered locus">SERP0885</name>
</gene>
<name>CLS1_STAEQ</name>